<accession>Q1LLK0</accession>
<reference key="1">
    <citation type="journal article" date="2010" name="PLoS ONE">
        <title>The complete genome sequence of Cupriavidus metallidurans strain CH34, a master survivalist in harsh and anthropogenic environments.</title>
        <authorList>
            <person name="Janssen P.J."/>
            <person name="Van Houdt R."/>
            <person name="Moors H."/>
            <person name="Monsieurs P."/>
            <person name="Morin N."/>
            <person name="Michaux A."/>
            <person name="Benotmane M.A."/>
            <person name="Leys N."/>
            <person name="Vallaeys T."/>
            <person name="Lapidus A."/>
            <person name="Monchy S."/>
            <person name="Medigue C."/>
            <person name="Taghavi S."/>
            <person name="McCorkle S."/>
            <person name="Dunn J."/>
            <person name="van der Lelie D."/>
            <person name="Mergeay M."/>
        </authorList>
    </citation>
    <scope>NUCLEOTIDE SEQUENCE [LARGE SCALE GENOMIC DNA]</scope>
    <source>
        <strain>ATCC 43123 / DSM 2839 / NBRC 102507 / CH34</strain>
    </source>
</reference>
<comment type="function">
    <text evidence="1">Required for the first step of histidine biosynthesis. May allow the feedback regulation of ATP phosphoribosyltransferase activity by histidine.</text>
</comment>
<comment type="pathway">
    <text evidence="1">Amino-acid biosynthesis; L-histidine biosynthesis; L-histidine from 5-phospho-alpha-D-ribose 1-diphosphate: step 1/9.</text>
</comment>
<comment type="subunit">
    <text evidence="1">Heteromultimer composed of HisG and HisZ subunits.</text>
</comment>
<comment type="subcellular location">
    <subcellularLocation>
        <location evidence="1">Cytoplasm</location>
    </subcellularLocation>
</comment>
<comment type="miscellaneous">
    <text>This function is generally fulfilled by the C-terminal part of HisG, which is missing in some bacteria such as this one.</text>
</comment>
<comment type="similarity">
    <text evidence="1">Belongs to the class-II aminoacyl-tRNA synthetase family. HisZ subfamily.</text>
</comment>
<organism>
    <name type="scientific">Cupriavidus metallidurans (strain ATCC 43123 / DSM 2839 / NBRC 102507 / CH34)</name>
    <name type="common">Ralstonia metallidurans</name>
    <dbReference type="NCBI Taxonomy" id="266264"/>
    <lineage>
        <taxon>Bacteria</taxon>
        <taxon>Pseudomonadati</taxon>
        <taxon>Pseudomonadota</taxon>
        <taxon>Betaproteobacteria</taxon>
        <taxon>Burkholderiales</taxon>
        <taxon>Burkholderiaceae</taxon>
        <taxon>Cupriavidus</taxon>
    </lineage>
</organism>
<name>HISZ_CUPMC</name>
<dbReference type="EMBL" id="CP000352">
    <property type="protein sequence ID" value="ABF08976.1"/>
    <property type="molecule type" value="Genomic_DNA"/>
</dbReference>
<dbReference type="RefSeq" id="WP_011516810.1">
    <property type="nucleotide sequence ID" value="NC_007973.1"/>
</dbReference>
<dbReference type="SMR" id="Q1LLK0"/>
<dbReference type="STRING" id="266264.Rmet_2097"/>
<dbReference type="KEGG" id="rme:Rmet_2097"/>
<dbReference type="eggNOG" id="COG3705">
    <property type="taxonomic scope" value="Bacteria"/>
</dbReference>
<dbReference type="HOGENOM" id="CLU_025113_0_1_4"/>
<dbReference type="UniPathway" id="UPA00031">
    <property type="reaction ID" value="UER00006"/>
</dbReference>
<dbReference type="Proteomes" id="UP000002429">
    <property type="component" value="Chromosome"/>
</dbReference>
<dbReference type="GO" id="GO:0005737">
    <property type="term" value="C:cytoplasm"/>
    <property type="evidence" value="ECO:0007669"/>
    <property type="project" value="UniProtKB-SubCell"/>
</dbReference>
<dbReference type="GO" id="GO:0004821">
    <property type="term" value="F:histidine-tRNA ligase activity"/>
    <property type="evidence" value="ECO:0007669"/>
    <property type="project" value="TreeGrafter"/>
</dbReference>
<dbReference type="GO" id="GO:0006427">
    <property type="term" value="P:histidyl-tRNA aminoacylation"/>
    <property type="evidence" value="ECO:0007669"/>
    <property type="project" value="TreeGrafter"/>
</dbReference>
<dbReference type="GO" id="GO:0000105">
    <property type="term" value="P:L-histidine biosynthetic process"/>
    <property type="evidence" value="ECO:0007669"/>
    <property type="project" value="UniProtKB-UniRule"/>
</dbReference>
<dbReference type="CDD" id="cd00773">
    <property type="entry name" value="HisRS-like_core"/>
    <property type="match status" value="1"/>
</dbReference>
<dbReference type="Gene3D" id="3.30.930.10">
    <property type="entry name" value="Bira Bifunctional Protein, Domain 2"/>
    <property type="match status" value="1"/>
</dbReference>
<dbReference type="HAMAP" id="MF_00125">
    <property type="entry name" value="HisZ"/>
    <property type="match status" value="1"/>
</dbReference>
<dbReference type="InterPro" id="IPR045864">
    <property type="entry name" value="aa-tRNA-synth_II/BPL/LPL"/>
</dbReference>
<dbReference type="InterPro" id="IPR041715">
    <property type="entry name" value="HisRS-like_core"/>
</dbReference>
<dbReference type="InterPro" id="IPR004516">
    <property type="entry name" value="HisRS/HisZ"/>
</dbReference>
<dbReference type="InterPro" id="IPR004517">
    <property type="entry name" value="HisZ"/>
</dbReference>
<dbReference type="NCBIfam" id="TIGR00443">
    <property type="entry name" value="hisZ_biosyn_reg"/>
    <property type="match status" value="1"/>
</dbReference>
<dbReference type="NCBIfam" id="NF008935">
    <property type="entry name" value="PRK12292.1-1"/>
    <property type="match status" value="1"/>
</dbReference>
<dbReference type="NCBIfam" id="NF009086">
    <property type="entry name" value="PRK12421.1"/>
    <property type="match status" value="1"/>
</dbReference>
<dbReference type="PANTHER" id="PTHR43707:SF1">
    <property type="entry name" value="HISTIDINE--TRNA LIGASE, MITOCHONDRIAL-RELATED"/>
    <property type="match status" value="1"/>
</dbReference>
<dbReference type="PANTHER" id="PTHR43707">
    <property type="entry name" value="HISTIDYL-TRNA SYNTHETASE"/>
    <property type="match status" value="1"/>
</dbReference>
<dbReference type="Pfam" id="PF13393">
    <property type="entry name" value="tRNA-synt_His"/>
    <property type="match status" value="1"/>
</dbReference>
<dbReference type="SUPFAM" id="SSF55681">
    <property type="entry name" value="Class II aaRS and biotin synthetases"/>
    <property type="match status" value="1"/>
</dbReference>
<gene>
    <name evidence="1" type="primary">hisZ</name>
    <name type="ordered locus">Rmet_2097</name>
</gene>
<evidence type="ECO:0000255" key="1">
    <source>
        <dbReference type="HAMAP-Rule" id="MF_00125"/>
    </source>
</evidence>
<sequence>MSNRWLLPENIADVLPSEARKIEELRRRMLDLFRTYGYELVMPPMLEYLESLLTGTGHDLDLRTLKLVDQLSGRTLGLRADITPQVARIDAHLLNRPGVTRLCYAGNVLHARPAGFNATREPIQIGAEIYGHAGLEADVEIQELMLAALQVAGLSDIRLDLCHAGILEALLAALPSIRQIEEAMFAALETKDVPALRELTQGLPDTERDALLALPTLYGGVEVIERARATLPASPAIGRALDELAALAAQVSNASVNIDLSDLRGYHYHSGVMFTAYVSGLPNYVARGGRYDKVGEAFGRARPATGFSLDLREVAALSPVEVRAQAIFAPWDADPALRFAITTLRANGEIVIQSLPGHTHELDEFNCDRQLQRQGANWVVVPR</sequence>
<protein>
    <recommendedName>
        <fullName evidence="1">ATP phosphoribosyltransferase regulatory subunit</fullName>
    </recommendedName>
</protein>
<keyword id="KW-0028">Amino-acid biosynthesis</keyword>
<keyword id="KW-0963">Cytoplasm</keyword>
<keyword id="KW-0368">Histidine biosynthesis</keyword>
<keyword id="KW-1185">Reference proteome</keyword>
<proteinExistence type="inferred from homology"/>
<feature type="chain" id="PRO_1000016282" description="ATP phosphoribosyltransferase regulatory subunit">
    <location>
        <begin position="1"/>
        <end position="383"/>
    </location>
</feature>